<organism>
    <name type="scientific">Pseudomonas fluorescens (strain Pf0-1)</name>
    <dbReference type="NCBI Taxonomy" id="205922"/>
    <lineage>
        <taxon>Bacteria</taxon>
        <taxon>Pseudomonadati</taxon>
        <taxon>Pseudomonadota</taxon>
        <taxon>Gammaproteobacteria</taxon>
        <taxon>Pseudomonadales</taxon>
        <taxon>Pseudomonadaceae</taxon>
        <taxon>Pseudomonas</taxon>
    </lineage>
</organism>
<evidence type="ECO:0000255" key="1">
    <source>
        <dbReference type="HAMAP-Rule" id="MF_00089"/>
    </source>
</evidence>
<evidence type="ECO:0000256" key="2">
    <source>
        <dbReference type="SAM" id="MobiDB-lite"/>
    </source>
</evidence>
<protein>
    <recommendedName>
        <fullName evidence="1">Phosphomethylpyrimidine synthase</fullName>
        <ecNumber evidence="1">4.1.99.17</ecNumber>
    </recommendedName>
    <alternativeName>
        <fullName evidence="1">Hydroxymethylpyrimidine phosphate synthase</fullName>
        <shortName evidence="1">HMP-P synthase</shortName>
        <shortName evidence="1">HMP-phosphate synthase</shortName>
        <shortName evidence="1">HMPP synthase</shortName>
    </alternativeName>
    <alternativeName>
        <fullName evidence="1">Thiamine biosynthesis protein ThiC</fullName>
    </alternativeName>
</protein>
<accession>Q3KJ20</accession>
<name>THIC_PSEPF</name>
<comment type="function">
    <text evidence="1">Catalyzes the synthesis of the hydroxymethylpyrimidine phosphate (HMP-P) moiety of thiamine from aminoimidazole ribotide (AIR) in a radical S-adenosyl-L-methionine (SAM)-dependent reaction.</text>
</comment>
<comment type="catalytic activity">
    <reaction evidence="1">
        <text>5-amino-1-(5-phospho-beta-D-ribosyl)imidazole + S-adenosyl-L-methionine = 4-amino-2-methyl-5-(phosphooxymethyl)pyrimidine + CO + 5'-deoxyadenosine + formate + L-methionine + 3 H(+)</text>
        <dbReference type="Rhea" id="RHEA:24840"/>
        <dbReference type="ChEBI" id="CHEBI:15378"/>
        <dbReference type="ChEBI" id="CHEBI:15740"/>
        <dbReference type="ChEBI" id="CHEBI:17245"/>
        <dbReference type="ChEBI" id="CHEBI:17319"/>
        <dbReference type="ChEBI" id="CHEBI:57844"/>
        <dbReference type="ChEBI" id="CHEBI:58354"/>
        <dbReference type="ChEBI" id="CHEBI:59789"/>
        <dbReference type="ChEBI" id="CHEBI:137981"/>
        <dbReference type="EC" id="4.1.99.17"/>
    </reaction>
</comment>
<comment type="cofactor">
    <cofactor evidence="1">
        <name>[4Fe-4S] cluster</name>
        <dbReference type="ChEBI" id="CHEBI:49883"/>
    </cofactor>
    <text evidence="1">Binds 1 [4Fe-4S] cluster per subunit. The cluster is coordinated with 3 cysteines and an exchangeable S-adenosyl-L-methionine.</text>
</comment>
<comment type="pathway">
    <text evidence="1">Cofactor biosynthesis; thiamine diphosphate biosynthesis.</text>
</comment>
<comment type="subunit">
    <text evidence="1">Homodimer.</text>
</comment>
<comment type="similarity">
    <text evidence="1">Belongs to the ThiC family.</text>
</comment>
<keyword id="KW-0004">4Fe-4S</keyword>
<keyword id="KW-0408">Iron</keyword>
<keyword id="KW-0411">Iron-sulfur</keyword>
<keyword id="KW-0456">Lyase</keyword>
<keyword id="KW-0479">Metal-binding</keyword>
<keyword id="KW-0949">S-adenosyl-L-methionine</keyword>
<keyword id="KW-0784">Thiamine biosynthesis</keyword>
<keyword id="KW-0862">Zinc</keyword>
<gene>
    <name evidence="1" type="primary">thiC</name>
    <name type="ordered locus">Pfl01_0492</name>
</gene>
<sequence length="629" mass="69811">MTTKSKNAINLSDSAKVDEQSVQPFTRSQKVYVQGSRPDIRVPMREITLDVTPTDFGGEINAPVTVYDTSGPYTDPNVVIDVRKGLGDVRSAWIDDRGDTERLPGLSSNFGQERLADPELTKLRFAHVNNPRRAKAGANVSQMHYARKGIITAEMEYVAIRENMKLQEARAAGLLKQQHAGHSFGASIPKEITPEFVREEIARGRAIIPANINHVELEPMIIGRNFLVKINGNIGNSALGSSIEEEVAKLTWGIRWGSDTVMDLSTGKHIHETREWIIRNSPVPIGTVPIYQALEKVNGVAEDLTWELFRDTLIEQAEQGVDYFTIHAGVLLRYVPLTAKRVTGIVSRGGSIMAKWCLAHHKENFLYTHFDEICEIMKAYDVSFSLGDGLRPGSIADANDEAQFGELETLGELTKIAWKHDVQCMIEGPGHVPMQLIKENMDKQLECCDEAPFYTLGPLTTDIAPGYDHITSGIGAAMIGWFGCAMLCYVTPKEHLGLPNKDDVKTGIITYKIAAHAADLAKGHPGAQIRDNALSKARFEFRWEDQFNLGLDPDTARSYHDETLPKDSAKVAHFCSMCGPKFCSMKITQEVREYAANQRIDAVDVDVAQGLAEQAERFKKEGSQLYKKV</sequence>
<feature type="chain" id="PRO_0000242288" description="Phosphomethylpyrimidine synthase">
    <location>
        <begin position="1"/>
        <end position="629"/>
    </location>
</feature>
<feature type="region of interest" description="Disordered" evidence="2">
    <location>
        <begin position="1"/>
        <end position="22"/>
    </location>
</feature>
<feature type="compositionally biased region" description="Polar residues" evidence="2">
    <location>
        <begin position="1"/>
        <end position="13"/>
    </location>
</feature>
<feature type="binding site" evidence="1">
    <location>
        <position position="233"/>
    </location>
    <ligand>
        <name>substrate</name>
    </ligand>
</feature>
<feature type="binding site" evidence="1">
    <location>
        <position position="262"/>
    </location>
    <ligand>
        <name>substrate</name>
    </ligand>
</feature>
<feature type="binding site" evidence="1">
    <location>
        <position position="291"/>
    </location>
    <ligand>
        <name>substrate</name>
    </ligand>
</feature>
<feature type="binding site" evidence="1">
    <location>
        <position position="327"/>
    </location>
    <ligand>
        <name>substrate</name>
    </ligand>
</feature>
<feature type="binding site" evidence="1">
    <location>
        <begin position="347"/>
        <end position="349"/>
    </location>
    <ligand>
        <name>substrate</name>
    </ligand>
</feature>
<feature type="binding site" evidence="1">
    <location>
        <begin position="388"/>
        <end position="391"/>
    </location>
    <ligand>
        <name>substrate</name>
    </ligand>
</feature>
<feature type="binding site" evidence="1">
    <location>
        <position position="427"/>
    </location>
    <ligand>
        <name>substrate</name>
    </ligand>
</feature>
<feature type="binding site" evidence="1">
    <location>
        <position position="431"/>
    </location>
    <ligand>
        <name>Zn(2+)</name>
        <dbReference type="ChEBI" id="CHEBI:29105"/>
    </ligand>
</feature>
<feature type="binding site" evidence="1">
    <location>
        <position position="454"/>
    </location>
    <ligand>
        <name>substrate</name>
    </ligand>
</feature>
<feature type="binding site" evidence="1">
    <location>
        <position position="495"/>
    </location>
    <ligand>
        <name>Zn(2+)</name>
        <dbReference type="ChEBI" id="CHEBI:29105"/>
    </ligand>
</feature>
<feature type="binding site" evidence="1">
    <location>
        <position position="575"/>
    </location>
    <ligand>
        <name>[4Fe-4S] cluster</name>
        <dbReference type="ChEBI" id="CHEBI:49883"/>
        <note>4Fe-4S-S-AdoMet</note>
    </ligand>
</feature>
<feature type="binding site" evidence="1">
    <location>
        <position position="578"/>
    </location>
    <ligand>
        <name>[4Fe-4S] cluster</name>
        <dbReference type="ChEBI" id="CHEBI:49883"/>
        <note>4Fe-4S-S-AdoMet</note>
    </ligand>
</feature>
<feature type="binding site" evidence="1">
    <location>
        <position position="583"/>
    </location>
    <ligand>
        <name>[4Fe-4S] cluster</name>
        <dbReference type="ChEBI" id="CHEBI:49883"/>
        <note>4Fe-4S-S-AdoMet</note>
    </ligand>
</feature>
<dbReference type="EC" id="4.1.99.17" evidence="1"/>
<dbReference type="EMBL" id="CP000094">
    <property type="protein sequence ID" value="ABA72236.1"/>
    <property type="molecule type" value="Genomic_DNA"/>
</dbReference>
<dbReference type="RefSeq" id="WP_011332157.1">
    <property type="nucleotide sequence ID" value="NC_007492.2"/>
</dbReference>
<dbReference type="SMR" id="Q3KJ20"/>
<dbReference type="KEGG" id="pfo:Pfl01_0492"/>
<dbReference type="eggNOG" id="COG0422">
    <property type="taxonomic scope" value="Bacteria"/>
</dbReference>
<dbReference type="HOGENOM" id="CLU_013181_2_1_6"/>
<dbReference type="UniPathway" id="UPA00060"/>
<dbReference type="Proteomes" id="UP000002704">
    <property type="component" value="Chromosome"/>
</dbReference>
<dbReference type="GO" id="GO:0005829">
    <property type="term" value="C:cytosol"/>
    <property type="evidence" value="ECO:0007669"/>
    <property type="project" value="TreeGrafter"/>
</dbReference>
<dbReference type="GO" id="GO:0051539">
    <property type="term" value="F:4 iron, 4 sulfur cluster binding"/>
    <property type="evidence" value="ECO:0007669"/>
    <property type="project" value="UniProtKB-KW"/>
</dbReference>
<dbReference type="GO" id="GO:0016830">
    <property type="term" value="F:carbon-carbon lyase activity"/>
    <property type="evidence" value="ECO:0007669"/>
    <property type="project" value="InterPro"/>
</dbReference>
<dbReference type="GO" id="GO:0008270">
    <property type="term" value="F:zinc ion binding"/>
    <property type="evidence" value="ECO:0007669"/>
    <property type="project" value="UniProtKB-UniRule"/>
</dbReference>
<dbReference type="GO" id="GO:0009228">
    <property type="term" value="P:thiamine biosynthetic process"/>
    <property type="evidence" value="ECO:0007669"/>
    <property type="project" value="UniProtKB-KW"/>
</dbReference>
<dbReference type="GO" id="GO:0009229">
    <property type="term" value="P:thiamine diphosphate biosynthetic process"/>
    <property type="evidence" value="ECO:0007669"/>
    <property type="project" value="UniProtKB-UniRule"/>
</dbReference>
<dbReference type="FunFam" id="3.20.20.540:FF:000001">
    <property type="entry name" value="Phosphomethylpyrimidine synthase"/>
    <property type="match status" value="1"/>
</dbReference>
<dbReference type="Gene3D" id="6.10.250.620">
    <property type="match status" value="1"/>
</dbReference>
<dbReference type="Gene3D" id="3.20.20.540">
    <property type="entry name" value="Radical SAM ThiC family, central domain"/>
    <property type="match status" value="1"/>
</dbReference>
<dbReference type="HAMAP" id="MF_00089">
    <property type="entry name" value="ThiC"/>
    <property type="match status" value="1"/>
</dbReference>
<dbReference type="InterPro" id="IPR037509">
    <property type="entry name" value="ThiC"/>
</dbReference>
<dbReference type="InterPro" id="IPR025747">
    <property type="entry name" value="ThiC-associated_dom"/>
</dbReference>
<dbReference type="InterPro" id="IPR038521">
    <property type="entry name" value="ThiC/Bza_core_dom"/>
</dbReference>
<dbReference type="InterPro" id="IPR002817">
    <property type="entry name" value="ThiC/BzaA/B"/>
</dbReference>
<dbReference type="NCBIfam" id="NF006763">
    <property type="entry name" value="PRK09284.1"/>
    <property type="match status" value="1"/>
</dbReference>
<dbReference type="NCBIfam" id="NF009895">
    <property type="entry name" value="PRK13352.1"/>
    <property type="match status" value="1"/>
</dbReference>
<dbReference type="NCBIfam" id="TIGR00190">
    <property type="entry name" value="thiC"/>
    <property type="match status" value="1"/>
</dbReference>
<dbReference type="PANTHER" id="PTHR30557:SF1">
    <property type="entry name" value="PHOSPHOMETHYLPYRIMIDINE SYNTHASE, CHLOROPLASTIC"/>
    <property type="match status" value="1"/>
</dbReference>
<dbReference type="PANTHER" id="PTHR30557">
    <property type="entry name" value="THIAMINE BIOSYNTHESIS PROTEIN THIC"/>
    <property type="match status" value="1"/>
</dbReference>
<dbReference type="Pfam" id="PF13667">
    <property type="entry name" value="ThiC-associated"/>
    <property type="match status" value="1"/>
</dbReference>
<dbReference type="Pfam" id="PF01964">
    <property type="entry name" value="ThiC_Rad_SAM"/>
    <property type="match status" value="1"/>
</dbReference>
<dbReference type="SFLD" id="SFLDF00407">
    <property type="entry name" value="phosphomethylpyrimidine_syntha"/>
    <property type="match status" value="1"/>
</dbReference>
<dbReference type="SFLD" id="SFLDG01114">
    <property type="entry name" value="phosphomethylpyrimidine_syntha"/>
    <property type="match status" value="1"/>
</dbReference>
<dbReference type="SFLD" id="SFLDS00113">
    <property type="entry name" value="Radical_SAM_Phosphomethylpyrim"/>
    <property type="match status" value="1"/>
</dbReference>
<proteinExistence type="inferred from homology"/>
<reference key="1">
    <citation type="journal article" date="2009" name="Genome Biol.">
        <title>Genomic and genetic analyses of diversity and plant interactions of Pseudomonas fluorescens.</title>
        <authorList>
            <person name="Silby M.W."/>
            <person name="Cerdeno-Tarraga A.M."/>
            <person name="Vernikos G.S."/>
            <person name="Giddens S.R."/>
            <person name="Jackson R.W."/>
            <person name="Preston G.M."/>
            <person name="Zhang X.-X."/>
            <person name="Moon C.D."/>
            <person name="Gehrig S.M."/>
            <person name="Godfrey S.A.C."/>
            <person name="Knight C.G."/>
            <person name="Malone J.G."/>
            <person name="Robinson Z."/>
            <person name="Spiers A.J."/>
            <person name="Harris S."/>
            <person name="Challis G.L."/>
            <person name="Yaxley A.M."/>
            <person name="Harris D."/>
            <person name="Seeger K."/>
            <person name="Murphy L."/>
            <person name="Rutter S."/>
            <person name="Squares R."/>
            <person name="Quail M.A."/>
            <person name="Saunders E."/>
            <person name="Mavromatis K."/>
            <person name="Brettin T.S."/>
            <person name="Bentley S.D."/>
            <person name="Hothersall J."/>
            <person name="Stephens E."/>
            <person name="Thomas C.M."/>
            <person name="Parkhill J."/>
            <person name="Levy S.B."/>
            <person name="Rainey P.B."/>
            <person name="Thomson N.R."/>
        </authorList>
    </citation>
    <scope>NUCLEOTIDE SEQUENCE [LARGE SCALE GENOMIC DNA]</scope>
    <source>
        <strain>Pf0-1</strain>
    </source>
</reference>